<sequence length="371" mass="40856">MELAEDWLVESLRLYQDFHAFDLSGATRVLEWIGEKGVFVAGYESLKKNEILHLILPLRLSVQENQGLHPERDFKVRHGGFSDRSVFDLKHVPDTRLLVTSGLPGCYIQMWQVREDNDVIEAVSTIDVQDKEESLWPRVSVFCSKAPGILHGARLSGLRTVDVESQKITYSSGTADSESLSCLQVLDANTFAFCGNSGRLGLVDTRQKWAALETVSPGSGCSGERWCAEVRNKGQGPGPCIASLGSDGQLCLLDSRNLCHPVSSAQCPVFKPSPDPELLRVTWAPGLDNCLAISGFDGTVQIYDVTSWDGKKTQAEPLFTHKGHIFLDGNDVDSAPLVTTHTWHPRKPRTLLSAASDSSLHVWDWVDLQAS</sequence>
<gene>
    <name type="primary">Wdr73</name>
</gene>
<evidence type="ECO:0000250" key="1">
    <source>
        <dbReference type="UniProtKB" id="Q6P4I2"/>
    </source>
</evidence>
<evidence type="ECO:0000303" key="2">
    <source>
    </source>
</evidence>
<evidence type="ECO:0000303" key="3">
    <source ref="2"/>
</evidence>
<evidence type="ECO:0000305" key="4"/>
<protein>
    <recommendedName>
        <fullName evidence="4">Integrator complex assembly factor WDR73</fullName>
    </recommendedName>
    <alternativeName>
        <fullName>WD repeat-containing protein 73</fullName>
    </alternativeName>
</protein>
<feature type="chain" id="PRO_0000307281" description="Integrator complex assembly factor WDR73">
    <location>
        <begin position="1"/>
        <end position="371"/>
    </location>
</feature>
<feature type="repeat" description="WD 1">
    <location>
        <begin position="81"/>
        <end position="121"/>
    </location>
</feature>
<feature type="repeat" description="WD 2">
    <location>
        <begin position="273"/>
        <end position="313"/>
    </location>
</feature>
<feature type="repeat" description="WD 3">
    <location>
        <begin position="333"/>
        <end position="371"/>
    </location>
</feature>
<feature type="splice variant" id="VSP_028667" description="In isoform 4." evidence="2">
    <location>
        <begin position="1"/>
        <end position="109"/>
    </location>
</feature>
<feature type="splice variant" id="VSP_028668" description="In isoform 2." evidence="3">
    <original>N</original>
    <variation>NAEPGKKHLSQGTAQFLSTTCNQ</variation>
    <location>
        <position position="117"/>
    </location>
</feature>
<feature type="splice variant" id="VSP_028669" description="In isoform 3 and isoform 4." evidence="2">
    <original>FDGTVQIYDVTSWDGKK</original>
    <variation>TVENVSLHCSLPEAVGA</variation>
    <location>
        <begin position="296"/>
        <end position="312"/>
    </location>
</feature>
<feature type="splice variant" id="VSP_028670" description="In isoform 3." evidence="2">
    <location>
        <begin position="313"/>
        <end position="371"/>
    </location>
</feature>
<feature type="sequence conflict" description="In Ref. 1; BAE41211." evidence="4" ref="1">
    <original>H</original>
    <variation>R</variation>
    <location>
        <position position="91"/>
    </location>
</feature>
<feature type="sequence conflict" description="In Ref. 2; BAD90132." evidence="4" ref="2">
    <original>C</original>
    <variation>S</variation>
    <location>
        <position position="221"/>
    </location>
</feature>
<keyword id="KW-0025">Alternative splicing</keyword>
<keyword id="KW-0963">Cytoplasm</keyword>
<keyword id="KW-0206">Cytoskeleton</keyword>
<keyword id="KW-1185">Reference proteome</keyword>
<keyword id="KW-0677">Repeat</keyword>
<keyword id="KW-0853">WD repeat</keyword>
<comment type="function">
    <text evidence="1">Component of a multiprotein complex required for the assembly of the RNA endonuclease module of the integrator complex. Associates with INTS9 and INTS11 in the cytoplasm, stabilizing the INTS9-INTS11 heterodimer and blocking the active site of INTS11. BRAT1 then joins the complex and plugs the active site of INTS11, leading to WDR73 release and nuclear import of INTS9 and INTS11.</text>
</comment>
<comment type="subunit">
    <text evidence="1">Interacts with INTS9 and INTS11; the interaction is direct. Part of the multiprotein complex composed of BRAT1, WDR73, as well as integrator complex subunits INTS9 and INTS11.</text>
</comment>
<comment type="subcellular location">
    <subcellularLocation>
        <location evidence="1">Cytoplasm</location>
    </subcellularLocation>
    <subcellularLocation>
        <location evidence="1">Cytoplasm</location>
        <location evidence="1">Cytoskeleton</location>
        <location evidence="1">Spindle</location>
    </subcellularLocation>
    <subcellularLocation>
        <location evidence="1">Cytoplasm</location>
        <location evidence="1">Cytoskeleton</location>
        <location evidence="1">Spindle pole</location>
    </subcellularLocation>
    <subcellularLocation>
        <location evidence="1">Cleavage furrow</location>
    </subcellularLocation>
    <text evidence="1">During interphase, located in the cytoplasm. During mitosis, accumulates at the spindle poles and microtubule asters and later in the cleavage furrow.</text>
</comment>
<comment type="alternative products">
    <event type="alternative splicing"/>
    <isoform>
        <id>Q9CWR1-1</id>
        <name>1</name>
        <sequence type="displayed"/>
    </isoform>
    <isoform>
        <id>Q9CWR1-2</id>
        <name>2</name>
        <sequence type="described" ref="VSP_028668"/>
    </isoform>
    <isoform>
        <id>Q9CWR1-3</id>
        <name>3</name>
        <sequence type="described" ref="VSP_028669 VSP_028670"/>
    </isoform>
    <isoform>
        <id>Q9CWR1-4</id>
        <name>4</name>
        <sequence type="described" ref="VSP_028667 VSP_028669"/>
    </isoform>
</comment>
<comment type="similarity">
    <text evidence="4">Belongs to the WD repeat WDR73 family.</text>
</comment>
<comment type="sequence caution" evidence="4">
    <conflict type="frameshift">
        <sequence resource="EMBL-CDS" id="AAH28870"/>
    </conflict>
</comment>
<comment type="sequence caution" evidence="4">
    <conflict type="erroneous initiation">
        <sequence resource="EMBL-CDS" id="BAD90132"/>
    </conflict>
    <text>Extended N-terminus.</text>
</comment>
<dbReference type="EMBL" id="AK004708">
    <property type="protein sequence ID" value="BAC25093.1"/>
    <property type="molecule type" value="mRNA"/>
</dbReference>
<dbReference type="EMBL" id="AK010448">
    <property type="protein sequence ID" value="BAB26948.1"/>
    <property type="molecule type" value="mRNA"/>
</dbReference>
<dbReference type="EMBL" id="AK034740">
    <property type="protein sequence ID" value="BAC28814.1"/>
    <property type="molecule type" value="mRNA"/>
</dbReference>
<dbReference type="EMBL" id="AK049132">
    <property type="protein sequence ID" value="BAC33560.1"/>
    <property type="molecule type" value="mRNA"/>
</dbReference>
<dbReference type="EMBL" id="AK169527">
    <property type="protein sequence ID" value="BAE41211.1"/>
    <property type="molecule type" value="mRNA"/>
</dbReference>
<dbReference type="EMBL" id="AK220207">
    <property type="protein sequence ID" value="BAD90132.1"/>
    <property type="status" value="ALT_INIT"/>
    <property type="molecule type" value="mRNA"/>
</dbReference>
<dbReference type="EMBL" id="BC028870">
    <property type="protein sequence ID" value="AAH28870.1"/>
    <property type="status" value="ALT_FRAME"/>
    <property type="molecule type" value="mRNA"/>
</dbReference>
<dbReference type="EMBL" id="BC087940">
    <property type="protein sequence ID" value="AAH87940.1"/>
    <property type="molecule type" value="mRNA"/>
</dbReference>
<dbReference type="CCDS" id="CCDS52282.1">
    <molecule id="Q9CWR1-1"/>
</dbReference>
<dbReference type="RefSeq" id="NP_082302.2">
    <molecule id="Q9CWR1-1"/>
    <property type="nucleotide sequence ID" value="NM_028026.2"/>
</dbReference>
<dbReference type="RefSeq" id="XP_006541269.1">
    <property type="nucleotide sequence ID" value="XM_006541206.1"/>
</dbReference>
<dbReference type="RefSeq" id="XP_006541270.1">
    <property type="nucleotide sequence ID" value="XM_006541207.3"/>
</dbReference>
<dbReference type="RefSeq" id="XP_006541271.1">
    <property type="nucleotide sequence ID" value="XM_006541208.2"/>
</dbReference>
<dbReference type="RefSeq" id="XP_006541272.1">
    <property type="nucleotide sequence ID" value="XM_006541209.1"/>
</dbReference>
<dbReference type="RefSeq" id="XP_011249206.1">
    <property type="nucleotide sequence ID" value="XM_011250904.1"/>
</dbReference>
<dbReference type="SMR" id="Q9CWR1"/>
<dbReference type="FunCoup" id="Q9CWR1">
    <property type="interactions" value="1409"/>
</dbReference>
<dbReference type="STRING" id="10090.ENSMUSP00000026816"/>
<dbReference type="PhosphoSitePlus" id="Q9CWR1"/>
<dbReference type="PaxDb" id="10090-ENSMUSP00000026816"/>
<dbReference type="PeptideAtlas" id="Q9CWR1"/>
<dbReference type="ProteomicsDB" id="275207">
    <molecule id="Q9CWR1-1"/>
</dbReference>
<dbReference type="ProteomicsDB" id="275208">
    <molecule id="Q9CWR1-2"/>
</dbReference>
<dbReference type="ProteomicsDB" id="275209">
    <molecule id="Q9CWR1-3"/>
</dbReference>
<dbReference type="ProteomicsDB" id="275210">
    <molecule id="Q9CWR1-4"/>
</dbReference>
<dbReference type="Pumba" id="Q9CWR1"/>
<dbReference type="Antibodypedia" id="50322">
    <property type="antibodies" value="88 antibodies from 18 providers"/>
</dbReference>
<dbReference type="Ensembl" id="ENSMUST00000026816.15">
    <molecule id="Q9CWR1-1"/>
    <property type="protein sequence ID" value="ENSMUSP00000026816.9"/>
    <property type="gene ID" value="ENSMUSG00000025722.17"/>
</dbReference>
<dbReference type="GeneID" id="71968"/>
<dbReference type="KEGG" id="mmu:71968"/>
<dbReference type="UCSC" id="uc009ibj.2">
    <molecule id="Q9CWR1-3"/>
    <property type="organism name" value="mouse"/>
</dbReference>
<dbReference type="UCSC" id="uc009ibk.2">
    <molecule id="Q9CWR1-1"/>
    <property type="organism name" value="mouse"/>
</dbReference>
<dbReference type="UCSC" id="uc033jae.1">
    <molecule id="Q9CWR1-4"/>
    <property type="organism name" value="mouse"/>
</dbReference>
<dbReference type="AGR" id="MGI:1919218"/>
<dbReference type="CTD" id="84942"/>
<dbReference type="MGI" id="MGI:1919218">
    <property type="gene designation" value="Wdr73"/>
</dbReference>
<dbReference type="VEuPathDB" id="HostDB:ENSMUSG00000025722"/>
<dbReference type="eggNOG" id="KOG0264">
    <property type="taxonomic scope" value="Eukaryota"/>
</dbReference>
<dbReference type="GeneTree" id="ENSGT00390000015701"/>
<dbReference type="HOGENOM" id="CLU_070481_0_0_1"/>
<dbReference type="InParanoid" id="Q9CWR1"/>
<dbReference type="OMA" id="CKPRTLL"/>
<dbReference type="OrthoDB" id="9822052at2759"/>
<dbReference type="PhylomeDB" id="Q9CWR1"/>
<dbReference type="TreeFam" id="TF331370"/>
<dbReference type="BioGRID-ORCS" id="71968">
    <property type="hits" value="26 hits in 72 CRISPR screens"/>
</dbReference>
<dbReference type="PRO" id="PR:Q9CWR1"/>
<dbReference type="Proteomes" id="UP000000589">
    <property type="component" value="Chromosome 7"/>
</dbReference>
<dbReference type="RNAct" id="Q9CWR1">
    <property type="molecule type" value="protein"/>
</dbReference>
<dbReference type="Bgee" id="ENSMUSG00000025722">
    <property type="expression patterns" value="Expressed in cleaving embryo and 226 other cell types or tissues"/>
</dbReference>
<dbReference type="ExpressionAtlas" id="Q9CWR1">
    <property type="expression patterns" value="baseline and differential"/>
</dbReference>
<dbReference type="GO" id="GO:0032154">
    <property type="term" value="C:cleavage furrow"/>
    <property type="evidence" value="ECO:0007669"/>
    <property type="project" value="UniProtKB-SubCell"/>
</dbReference>
<dbReference type="GO" id="GO:0005737">
    <property type="term" value="C:cytoplasm"/>
    <property type="evidence" value="ECO:0000250"/>
    <property type="project" value="UniProtKB"/>
</dbReference>
<dbReference type="GO" id="GO:0005829">
    <property type="term" value="C:cytosol"/>
    <property type="evidence" value="ECO:0007669"/>
    <property type="project" value="Ensembl"/>
</dbReference>
<dbReference type="GO" id="GO:0000922">
    <property type="term" value="C:spindle pole"/>
    <property type="evidence" value="ECO:0007669"/>
    <property type="project" value="UniProtKB-SubCell"/>
</dbReference>
<dbReference type="GO" id="GO:0030674">
    <property type="term" value="F:protein-macromolecule adaptor activity"/>
    <property type="evidence" value="ECO:0000250"/>
    <property type="project" value="UniProtKB"/>
</dbReference>
<dbReference type="GO" id="GO:0031122">
    <property type="term" value="P:cytoplasmic microtubule organization"/>
    <property type="evidence" value="ECO:0007669"/>
    <property type="project" value="Ensembl"/>
</dbReference>
<dbReference type="GO" id="GO:0006997">
    <property type="term" value="P:nucleus organization"/>
    <property type="evidence" value="ECO:0007669"/>
    <property type="project" value="Ensembl"/>
</dbReference>
<dbReference type="FunFam" id="2.130.10.10:FF:000662">
    <property type="entry name" value="WD repeat domain 73"/>
    <property type="match status" value="1"/>
</dbReference>
<dbReference type="Gene3D" id="2.130.10.10">
    <property type="entry name" value="YVTN repeat-like/Quinoprotein amine dehydrogenase"/>
    <property type="match status" value="1"/>
</dbReference>
<dbReference type="InterPro" id="IPR015943">
    <property type="entry name" value="WD40/YVTN_repeat-like_dom_sf"/>
</dbReference>
<dbReference type="InterPro" id="IPR036322">
    <property type="entry name" value="WD40_repeat_dom_sf"/>
</dbReference>
<dbReference type="InterPro" id="IPR001680">
    <property type="entry name" value="WD40_rpt"/>
</dbReference>
<dbReference type="InterPro" id="IPR042795">
    <property type="entry name" value="Wdr73"/>
</dbReference>
<dbReference type="PANTHER" id="PTHR46947">
    <property type="entry name" value="WD REPEAT-CONTAINING PROTEIN 73"/>
    <property type="match status" value="1"/>
</dbReference>
<dbReference type="PANTHER" id="PTHR46947:SF1">
    <property type="entry name" value="WD REPEAT-CONTAINING PROTEIN 73"/>
    <property type="match status" value="1"/>
</dbReference>
<dbReference type="SMART" id="SM00320">
    <property type="entry name" value="WD40"/>
    <property type="match status" value="3"/>
</dbReference>
<dbReference type="SUPFAM" id="SSF50978">
    <property type="entry name" value="WD40 repeat-like"/>
    <property type="match status" value="1"/>
</dbReference>
<organism>
    <name type="scientific">Mus musculus</name>
    <name type="common">Mouse</name>
    <dbReference type="NCBI Taxonomy" id="10090"/>
    <lineage>
        <taxon>Eukaryota</taxon>
        <taxon>Metazoa</taxon>
        <taxon>Chordata</taxon>
        <taxon>Craniata</taxon>
        <taxon>Vertebrata</taxon>
        <taxon>Euteleostomi</taxon>
        <taxon>Mammalia</taxon>
        <taxon>Eutheria</taxon>
        <taxon>Euarchontoglires</taxon>
        <taxon>Glires</taxon>
        <taxon>Rodentia</taxon>
        <taxon>Myomorpha</taxon>
        <taxon>Muroidea</taxon>
        <taxon>Muridae</taxon>
        <taxon>Murinae</taxon>
        <taxon>Mus</taxon>
        <taxon>Mus</taxon>
    </lineage>
</organism>
<name>WDR73_MOUSE</name>
<reference key="1">
    <citation type="journal article" date="2005" name="Science">
        <title>The transcriptional landscape of the mammalian genome.</title>
        <authorList>
            <person name="Carninci P."/>
            <person name="Kasukawa T."/>
            <person name="Katayama S."/>
            <person name="Gough J."/>
            <person name="Frith M.C."/>
            <person name="Maeda N."/>
            <person name="Oyama R."/>
            <person name="Ravasi T."/>
            <person name="Lenhard B."/>
            <person name="Wells C."/>
            <person name="Kodzius R."/>
            <person name="Shimokawa K."/>
            <person name="Bajic V.B."/>
            <person name="Brenner S.E."/>
            <person name="Batalov S."/>
            <person name="Forrest A.R."/>
            <person name="Zavolan M."/>
            <person name="Davis M.J."/>
            <person name="Wilming L.G."/>
            <person name="Aidinis V."/>
            <person name="Allen J.E."/>
            <person name="Ambesi-Impiombato A."/>
            <person name="Apweiler R."/>
            <person name="Aturaliya R.N."/>
            <person name="Bailey T.L."/>
            <person name="Bansal M."/>
            <person name="Baxter L."/>
            <person name="Beisel K.W."/>
            <person name="Bersano T."/>
            <person name="Bono H."/>
            <person name="Chalk A.M."/>
            <person name="Chiu K.P."/>
            <person name="Choudhary V."/>
            <person name="Christoffels A."/>
            <person name="Clutterbuck D.R."/>
            <person name="Crowe M.L."/>
            <person name="Dalla E."/>
            <person name="Dalrymple B.P."/>
            <person name="de Bono B."/>
            <person name="Della Gatta G."/>
            <person name="di Bernardo D."/>
            <person name="Down T."/>
            <person name="Engstrom P."/>
            <person name="Fagiolini M."/>
            <person name="Faulkner G."/>
            <person name="Fletcher C.F."/>
            <person name="Fukushima T."/>
            <person name="Furuno M."/>
            <person name="Futaki S."/>
            <person name="Gariboldi M."/>
            <person name="Georgii-Hemming P."/>
            <person name="Gingeras T.R."/>
            <person name="Gojobori T."/>
            <person name="Green R.E."/>
            <person name="Gustincich S."/>
            <person name="Harbers M."/>
            <person name="Hayashi Y."/>
            <person name="Hensch T.K."/>
            <person name="Hirokawa N."/>
            <person name="Hill D."/>
            <person name="Huminiecki L."/>
            <person name="Iacono M."/>
            <person name="Ikeo K."/>
            <person name="Iwama A."/>
            <person name="Ishikawa T."/>
            <person name="Jakt M."/>
            <person name="Kanapin A."/>
            <person name="Katoh M."/>
            <person name="Kawasawa Y."/>
            <person name="Kelso J."/>
            <person name="Kitamura H."/>
            <person name="Kitano H."/>
            <person name="Kollias G."/>
            <person name="Krishnan S.P."/>
            <person name="Kruger A."/>
            <person name="Kummerfeld S.K."/>
            <person name="Kurochkin I.V."/>
            <person name="Lareau L.F."/>
            <person name="Lazarevic D."/>
            <person name="Lipovich L."/>
            <person name="Liu J."/>
            <person name="Liuni S."/>
            <person name="McWilliam S."/>
            <person name="Madan Babu M."/>
            <person name="Madera M."/>
            <person name="Marchionni L."/>
            <person name="Matsuda H."/>
            <person name="Matsuzawa S."/>
            <person name="Miki H."/>
            <person name="Mignone F."/>
            <person name="Miyake S."/>
            <person name="Morris K."/>
            <person name="Mottagui-Tabar S."/>
            <person name="Mulder N."/>
            <person name="Nakano N."/>
            <person name="Nakauchi H."/>
            <person name="Ng P."/>
            <person name="Nilsson R."/>
            <person name="Nishiguchi S."/>
            <person name="Nishikawa S."/>
            <person name="Nori F."/>
            <person name="Ohara O."/>
            <person name="Okazaki Y."/>
            <person name="Orlando V."/>
            <person name="Pang K.C."/>
            <person name="Pavan W.J."/>
            <person name="Pavesi G."/>
            <person name="Pesole G."/>
            <person name="Petrovsky N."/>
            <person name="Piazza S."/>
            <person name="Reed J."/>
            <person name="Reid J.F."/>
            <person name="Ring B.Z."/>
            <person name="Ringwald M."/>
            <person name="Rost B."/>
            <person name="Ruan Y."/>
            <person name="Salzberg S.L."/>
            <person name="Sandelin A."/>
            <person name="Schneider C."/>
            <person name="Schoenbach C."/>
            <person name="Sekiguchi K."/>
            <person name="Semple C.A."/>
            <person name="Seno S."/>
            <person name="Sessa L."/>
            <person name="Sheng Y."/>
            <person name="Shibata Y."/>
            <person name="Shimada H."/>
            <person name="Shimada K."/>
            <person name="Silva D."/>
            <person name="Sinclair B."/>
            <person name="Sperling S."/>
            <person name="Stupka E."/>
            <person name="Sugiura K."/>
            <person name="Sultana R."/>
            <person name="Takenaka Y."/>
            <person name="Taki K."/>
            <person name="Tammoja K."/>
            <person name="Tan S.L."/>
            <person name="Tang S."/>
            <person name="Taylor M.S."/>
            <person name="Tegner J."/>
            <person name="Teichmann S.A."/>
            <person name="Ueda H.R."/>
            <person name="van Nimwegen E."/>
            <person name="Verardo R."/>
            <person name="Wei C.L."/>
            <person name="Yagi K."/>
            <person name="Yamanishi H."/>
            <person name="Zabarovsky E."/>
            <person name="Zhu S."/>
            <person name="Zimmer A."/>
            <person name="Hide W."/>
            <person name="Bult C."/>
            <person name="Grimmond S.M."/>
            <person name="Teasdale R.D."/>
            <person name="Liu E.T."/>
            <person name="Brusic V."/>
            <person name="Quackenbush J."/>
            <person name="Wahlestedt C."/>
            <person name="Mattick J.S."/>
            <person name="Hume D.A."/>
            <person name="Kai C."/>
            <person name="Sasaki D."/>
            <person name="Tomaru Y."/>
            <person name="Fukuda S."/>
            <person name="Kanamori-Katayama M."/>
            <person name="Suzuki M."/>
            <person name="Aoki J."/>
            <person name="Arakawa T."/>
            <person name="Iida J."/>
            <person name="Imamura K."/>
            <person name="Itoh M."/>
            <person name="Kato T."/>
            <person name="Kawaji H."/>
            <person name="Kawagashira N."/>
            <person name="Kawashima T."/>
            <person name="Kojima M."/>
            <person name="Kondo S."/>
            <person name="Konno H."/>
            <person name="Nakano K."/>
            <person name="Ninomiya N."/>
            <person name="Nishio T."/>
            <person name="Okada M."/>
            <person name="Plessy C."/>
            <person name="Shibata K."/>
            <person name="Shiraki T."/>
            <person name="Suzuki S."/>
            <person name="Tagami M."/>
            <person name="Waki K."/>
            <person name="Watahiki A."/>
            <person name="Okamura-Oho Y."/>
            <person name="Suzuki H."/>
            <person name="Kawai J."/>
            <person name="Hayashizaki Y."/>
        </authorList>
    </citation>
    <scope>NUCLEOTIDE SEQUENCE [LARGE SCALE MRNA] (ISOFORMS 1; 3 AND 4)</scope>
    <source>
        <strain>C57BL/6J</strain>
        <tissue>Embryo</tissue>
        <tissue>Lung</tissue>
        <tissue>Thymus</tissue>
    </source>
</reference>
<reference key="2">
    <citation type="submission" date="2005-02" db="EMBL/GenBank/DDBJ databases">
        <title>Prediction of the coding sequences of mouse homologues of KIAA gene. The complete nucleotide sequences of mouse KIAA-homologous cDNAs identified by screening of terminal sequences of cDNA clones randomly sampled from size-fractionated libraries.</title>
        <authorList>
            <person name="Okazaki N."/>
            <person name="Kikuno R.F."/>
            <person name="Ohara R."/>
            <person name="Inamoto S."/>
            <person name="Kitamura H."/>
            <person name="Nagase T."/>
            <person name="Ohara O."/>
            <person name="Koga H."/>
        </authorList>
    </citation>
    <scope>NUCLEOTIDE SEQUENCE [LARGE SCALE MRNA] (ISOFORM 2)</scope>
    <source>
        <tissue>Spleen</tissue>
    </source>
</reference>
<reference key="3">
    <citation type="journal article" date="2004" name="Genome Res.">
        <title>The status, quality, and expansion of the NIH full-length cDNA project: the Mammalian Gene Collection (MGC).</title>
        <authorList>
            <consortium name="The MGC Project Team"/>
        </authorList>
    </citation>
    <scope>NUCLEOTIDE SEQUENCE [LARGE SCALE MRNA] (ISOFORM 1)</scope>
    <source>
        <tissue>Kidney</tissue>
    </source>
</reference>
<reference key="4">
    <citation type="journal article" date="2010" name="Cell">
        <title>A tissue-specific atlas of mouse protein phosphorylation and expression.</title>
        <authorList>
            <person name="Huttlin E.L."/>
            <person name="Jedrychowski M.P."/>
            <person name="Elias J.E."/>
            <person name="Goswami T."/>
            <person name="Rad R."/>
            <person name="Beausoleil S.A."/>
            <person name="Villen J."/>
            <person name="Haas W."/>
            <person name="Sowa M.E."/>
            <person name="Gygi S.P."/>
        </authorList>
    </citation>
    <scope>IDENTIFICATION BY MASS SPECTROMETRY [LARGE SCALE ANALYSIS]</scope>
    <source>
        <tissue>Spleen</tissue>
    </source>
</reference>
<proteinExistence type="evidence at protein level"/>
<accession>Q9CWR1</accession>
<accession>Q05C70</accession>
<accession>Q3TEN7</accession>
<accession>Q571I2</accession>
<accession>Q8BSB9</accession>
<accession>Q8CF62</accession>